<organism>
    <name type="scientific">Shigella flexneri</name>
    <dbReference type="NCBI Taxonomy" id="623"/>
    <lineage>
        <taxon>Bacteria</taxon>
        <taxon>Pseudomonadati</taxon>
        <taxon>Pseudomonadota</taxon>
        <taxon>Gammaproteobacteria</taxon>
        <taxon>Enterobacterales</taxon>
        <taxon>Enterobacteriaceae</taxon>
        <taxon>Shigella</taxon>
    </lineage>
</organism>
<name>HIGB_SHIFL</name>
<sequence length="104" mass="12103">MHLITQKALKDAAEKYPQHKTELVALGNTIAKGYFKKPESLKAVFPSLDNFKYLDKHYVFNVGGNELRVVAMVFFESQKCYIREVMTHKEYDFFTAVHRTKGKK</sequence>
<protein>
    <recommendedName>
        <fullName>mRNA interferase HigB</fullName>
        <ecNumber>3.1.-.-</ecNumber>
    </recommendedName>
    <alternativeName>
        <fullName>Endoribonuclease HigB</fullName>
    </alternativeName>
    <alternativeName>
        <fullName>Toxin HigB</fullName>
    </alternativeName>
</protein>
<feature type="chain" id="PRO_0000169423" description="mRNA interferase HigB">
    <location>
        <begin position="1"/>
        <end position="104"/>
    </location>
</feature>
<feature type="helix" evidence="3">
    <location>
        <begin position="7"/>
        <end position="15"/>
    </location>
</feature>
<feature type="helix" evidence="3">
    <location>
        <begin position="17"/>
        <end position="19"/>
    </location>
</feature>
<feature type="helix" evidence="3">
    <location>
        <begin position="20"/>
        <end position="30"/>
    </location>
</feature>
<feature type="helix" evidence="3">
    <location>
        <begin position="40"/>
        <end position="43"/>
    </location>
</feature>
<feature type="strand" evidence="3">
    <location>
        <begin position="57"/>
        <end position="62"/>
    </location>
</feature>
<feature type="turn" evidence="3">
    <location>
        <begin position="63"/>
        <end position="66"/>
    </location>
</feature>
<feature type="strand" evidence="3">
    <location>
        <begin position="67"/>
        <end position="74"/>
    </location>
</feature>
<feature type="turn" evidence="3">
    <location>
        <begin position="75"/>
        <end position="78"/>
    </location>
</feature>
<feature type="strand" evidence="3">
    <location>
        <begin position="79"/>
        <end position="87"/>
    </location>
</feature>
<feature type="helix" evidence="3">
    <location>
        <begin position="88"/>
        <end position="96"/>
    </location>
</feature>
<keyword id="KW-0002">3D-structure</keyword>
<keyword id="KW-0255">Endonuclease</keyword>
<keyword id="KW-0378">Hydrolase</keyword>
<keyword id="KW-0540">Nuclease</keyword>
<keyword id="KW-1185">Reference proteome</keyword>
<keyword id="KW-0694">RNA-binding</keyword>
<keyword id="KW-1277">Toxin-antitoxin system</keyword>
<reference key="1">
    <citation type="journal article" date="2002" name="Nucleic Acids Res.">
        <title>Genome sequence of Shigella flexneri 2a: insights into pathogenicity through comparison with genomes of Escherichia coli K12 and O157.</title>
        <authorList>
            <person name="Jin Q."/>
            <person name="Yuan Z."/>
            <person name="Xu J."/>
            <person name="Wang Y."/>
            <person name="Shen Y."/>
            <person name="Lu W."/>
            <person name="Wang J."/>
            <person name="Liu H."/>
            <person name="Yang J."/>
            <person name="Yang F."/>
            <person name="Zhang X."/>
            <person name="Zhang J."/>
            <person name="Yang G."/>
            <person name="Wu H."/>
            <person name="Qu D."/>
            <person name="Dong J."/>
            <person name="Sun L."/>
            <person name="Xue Y."/>
            <person name="Zhao A."/>
            <person name="Gao Y."/>
            <person name="Zhu J."/>
            <person name="Kan B."/>
            <person name="Ding K."/>
            <person name="Chen S."/>
            <person name="Cheng H."/>
            <person name="Yao Z."/>
            <person name="He B."/>
            <person name="Chen R."/>
            <person name="Ma D."/>
            <person name="Qiang B."/>
            <person name="Wen Y."/>
            <person name="Hou Y."/>
            <person name="Yu J."/>
        </authorList>
    </citation>
    <scope>NUCLEOTIDE SEQUENCE [LARGE SCALE GENOMIC DNA]</scope>
    <source>
        <strain>301 / Serotype 2a</strain>
    </source>
</reference>
<reference key="2">
    <citation type="journal article" date="2003" name="Infect. Immun.">
        <title>Complete genome sequence and comparative genomics of Shigella flexneri serotype 2a strain 2457T.</title>
        <authorList>
            <person name="Wei J."/>
            <person name="Goldberg M.B."/>
            <person name="Burland V."/>
            <person name="Venkatesan M.M."/>
            <person name="Deng W."/>
            <person name="Fournier G."/>
            <person name="Mayhew G.F."/>
            <person name="Plunkett G. III"/>
            <person name="Rose D.J."/>
            <person name="Darling A."/>
            <person name="Mau B."/>
            <person name="Perna N.T."/>
            <person name="Payne S.M."/>
            <person name="Runyen-Janecky L.J."/>
            <person name="Zhou S."/>
            <person name="Schwartz D.C."/>
            <person name="Blattner F.R."/>
        </authorList>
    </citation>
    <scope>NUCLEOTIDE SEQUENCE [LARGE SCALE GENOMIC DNA]</scope>
    <source>
        <strain>ATCC 700930 / 2457T / Serotype 2a</strain>
    </source>
</reference>
<comment type="function">
    <text evidence="1">Toxic component of a type II toxin-antitoxin (TA) system. A probable translation-dependent mRNA interferase.</text>
</comment>
<comment type="subunit">
    <text evidence="1">Probably forms a complex with the antitoxin HigA which inhibits the mRNA interferase activity.</text>
</comment>
<comment type="similarity">
    <text evidence="2">Belongs to the HigB mRNA interferase family.</text>
</comment>
<gene>
    <name type="primary">higB</name>
    <name type="ordered locus">SF3123</name>
    <name type="ordered locus">S3330</name>
</gene>
<dbReference type="EC" id="3.1.-.-"/>
<dbReference type="EMBL" id="AE005674">
    <property type="protein sequence ID" value="AAN44595.2"/>
    <property type="molecule type" value="Genomic_DNA"/>
</dbReference>
<dbReference type="EMBL" id="AE014073">
    <property type="protein sequence ID" value="AAP18408.1"/>
    <property type="molecule type" value="Genomic_DNA"/>
</dbReference>
<dbReference type="RefSeq" id="WP_000550189.1">
    <property type="nucleotide sequence ID" value="NZ_WPGW01000031.1"/>
</dbReference>
<dbReference type="PDB" id="5YCL">
    <property type="method" value="X-ray"/>
    <property type="resolution" value="3.10 A"/>
    <property type="chains" value="B/D=1-99"/>
</dbReference>
<dbReference type="PDBsum" id="5YCL"/>
<dbReference type="SMR" id="P64580"/>
<dbReference type="STRING" id="198214.SF3123"/>
<dbReference type="PaxDb" id="198214-SF3123"/>
<dbReference type="GeneID" id="93778904"/>
<dbReference type="KEGG" id="sfl:SF3123"/>
<dbReference type="KEGG" id="sfx:S3330"/>
<dbReference type="PATRIC" id="fig|198214.7.peg.3710"/>
<dbReference type="HOGENOM" id="CLU_153067_0_1_6"/>
<dbReference type="Proteomes" id="UP000001006">
    <property type="component" value="Chromosome"/>
</dbReference>
<dbReference type="Proteomes" id="UP000002673">
    <property type="component" value="Chromosome"/>
</dbReference>
<dbReference type="GO" id="GO:0110001">
    <property type="term" value="C:toxin-antitoxin complex"/>
    <property type="evidence" value="ECO:0007669"/>
    <property type="project" value="InterPro"/>
</dbReference>
<dbReference type="GO" id="GO:0004519">
    <property type="term" value="F:endonuclease activity"/>
    <property type="evidence" value="ECO:0007669"/>
    <property type="project" value="UniProtKB-KW"/>
</dbReference>
<dbReference type="GO" id="GO:0003723">
    <property type="term" value="F:RNA binding"/>
    <property type="evidence" value="ECO:0007669"/>
    <property type="project" value="UniProtKB-KW"/>
</dbReference>
<dbReference type="InterPro" id="IPR018669">
    <property type="entry name" value="Toxin_HigB"/>
</dbReference>
<dbReference type="Pfam" id="PF09907">
    <property type="entry name" value="HigB_toxin"/>
    <property type="match status" value="1"/>
</dbReference>
<proteinExistence type="evidence at protein level"/>
<accession>P64580</accession>
<accession>P42595</accession>
<evidence type="ECO:0000250" key="1">
    <source>
        <dbReference type="UniProtKB" id="P64578"/>
    </source>
</evidence>
<evidence type="ECO:0000305" key="2"/>
<evidence type="ECO:0007829" key="3">
    <source>
        <dbReference type="PDB" id="5YCL"/>
    </source>
</evidence>